<proteinExistence type="evidence at transcript level"/>
<name>H16R1_CYRHA</name>
<organism>
    <name type="scientific">Cyriopagopus hainanus</name>
    <name type="common">Chinese bird spider</name>
    <name type="synonym">Haplopelma hainanum</name>
    <dbReference type="NCBI Taxonomy" id="209901"/>
    <lineage>
        <taxon>Eukaryota</taxon>
        <taxon>Metazoa</taxon>
        <taxon>Ecdysozoa</taxon>
        <taxon>Arthropoda</taxon>
        <taxon>Chelicerata</taxon>
        <taxon>Arachnida</taxon>
        <taxon>Araneae</taxon>
        <taxon>Mygalomorphae</taxon>
        <taxon>Theraphosidae</taxon>
        <taxon>Haplopelma</taxon>
    </lineage>
</organism>
<dbReference type="EMBL" id="GU292965">
    <property type="protein sequence ID" value="ADB56781.1"/>
    <property type="molecule type" value="mRNA"/>
</dbReference>
<dbReference type="ArachnoServer" id="AS001693">
    <property type="toxin name" value="U11-theraphotoxin-Hhn1r"/>
</dbReference>
<dbReference type="GO" id="GO:0005576">
    <property type="term" value="C:extracellular region"/>
    <property type="evidence" value="ECO:0007669"/>
    <property type="project" value="UniProtKB-SubCell"/>
</dbReference>
<dbReference type="GO" id="GO:0019871">
    <property type="term" value="F:sodium channel inhibitor activity"/>
    <property type="evidence" value="ECO:0007669"/>
    <property type="project" value="InterPro"/>
</dbReference>
<dbReference type="GO" id="GO:0090729">
    <property type="term" value="F:toxin activity"/>
    <property type="evidence" value="ECO:0007669"/>
    <property type="project" value="UniProtKB-KW"/>
</dbReference>
<dbReference type="InterPro" id="IPR012627">
    <property type="entry name" value="Toxin_22"/>
</dbReference>
<dbReference type="Pfam" id="PF08092">
    <property type="entry name" value="Toxin_22"/>
    <property type="match status" value="1"/>
</dbReference>
<reference key="1">
    <citation type="journal article" date="2010" name="J. Proteome Res.">
        <title>Molecular diversification of peptide toxins from the tarantula Haplopelma hainanum (Ornithoctonus hainana) venom based on transcriptomic, peptidomic, and genomic analyses.</title>
        <authorList>
            <person name="Tang X."/>
            <person name="Zhang Y."/>
            <person name="Hu W."/>
            <person name="Xu D."/>
            <person name="Tao H."/>
            <person name="Yang X."/>
            <person name="Li Y."/>
            <person name="Jiang L."/>
            <person name="Liang S."/>
        </authorList>
    </citation>
    <scope>NUCLEOTIDE SEQUENCE [LARGE SCALE MRNA]</scope>
    <source>
        <tissue>Venom gland</tissue>
    </source>
</reference>
<evidence type="ECO:0000250" key="1"/>
<evidence type="ECO:0000255" key="2"/>
<evidence type="ECO:0000256" key="3">
    <source>
        <dbReference type="SAM" id="MobiDB-lite"/>
    </source>
</evidence>
<evidence type="ECO:0000305" key="4"/>
<keyword id="KW-1015">Disulfide bond</keyword>
<keyword id="KW-0872">Ion channel impairing toxin</keyword>
<keyword id="KW-0960">Knottin</keyword>
<keyword id="KW-0964">Secreted</keyword>
<keyword id="KW-0732">Signal</keyword>
<keyword id="KW-0800">Toxin</keyword>
<accession>D2Y288</accession>
<comment type="function">
    <text evidence="1">Probable ion channel inhibitor.</text>
</comment>
<comment type="subcellular location">
    <subcellularLocation>
        <location evidence="1">Secreted</location>
    </subcellularLocation>
</comment>
<comment type="tissue specificity">
    <text>Expressed by the venom gland.</text>
</comment>
<comment type="domain">
    <text evidence="1">The presence of a 'disulfide through disulfide knot' structurally defines this protein as a knottin.</text>
</comment>
<comment type="similarity">
    <text evidence="4">Belongs to the neurotoxin 14 (magi-1) family. 01 (HNTX-16) subfamily.</text>
</comment>
<sequence length="113" mass="13063">MNTVRVTFLLVFVLAVSLGQADKDENRMEMQEKTEQGKSYLDFAENLLLQKLEELEAKLLEEDSEESRNSRQKRCIGEGVPCDENDPRCCSGLVCLKPTLHGIWYKSYYCHKK</sequence>
<feature type="signal peptide" evidence="2">
    <location>
        <begin position="1"/>
        <end position="21"/>
    </location>
</feature>
<feature type="propeptide" id="PRO_0000400951" evidence="1">
    <location>
        <begin position="22"/>
        <end position="74"/>
    </location>
</feature>
<feature type="peptide" id="PRO_0000400952" description="U11-theraphotoxin-Hhn1r">
    <location>
        <begin position="75"/>
        <end position="113"/>
    </location>
</feature>
<feature type="region of interest" description="Disordered" evidence="3">
    <location>
        <begin position="61"/>
        <end position="83"/>
    </location>
</feature>
<feature type="disulfide bond" evidence="1">
    <location>
        <begin position="75"/>
        <end position="90"/>
    </location>
</feature>
<feature type="disulfide bond" evidence="1">
    <location>
        <begin position="82"/>
        <end position="95"/>
    </location>
</feature>
<feature type="disulfide bond" evidence="1">
    <location>
        <begin position="89"/>
        <end position="110"/>
    </location>
</feature>
<protein>
    <recommendedName>
        <fullName>U11-theraphotoxin-Hhn1r</fullName>
        <shortName>U11-TRTX-Hhn1r</shortName>
    </recommendedName>
    <alternativeName>
        <fullName>Hainantoxin-XVI-18</fullName>
        <shortName>HNTX-XVI-18</shortName>
    </alternativeName>
</protein>